<evidence type="ECO:0000250" key="1">
    <source>
        <dbReference type="UniProtKB" id="P62263"/>
    </source>
</evidence>
<evidence type="ECO:0000256" key="2">
    <source>
        <dbReference type="SAM" id="MobiDB-lite"/>
    </source>
</evidence>
<evidence type="ECO:0000305" key="3"/>
<reference key="1">
    <citation type="journal article" date="1985" name="Mol. Cell. Biol.">
        <title>Emetine resistance of Chinese hamster cells: structures of wild-type and mutant ribosomal protein S14 mRNAs.</title>
        <authorList>
            <person name="Rhoads D.D."/>
            <person name="Roufa D.J."/>
        </authorList>
    </citation>
    <scope>NUCLEOTIDE SEQUENCE [MRNA]</scope>
</reference>
<reference key="2">
    <citation type="journal article" date="1990" name="Somat. Cell Mol. Genet.">
        <title>Genetic analysis of a vital mammalian housekeeping locus using CHO cells that express a transfected mutant allele.</title>
        <authorList>
            <person name="Diaz J.J."/>
            <person name="Rhoads D.D."/>
            <person name="Roufa D.J."/>
        </authorList>
    </citation>
    <scope>NUCLEOTIDE SEQUENCE [GENOMIC DNA]</scope>
</reference>
<reference key="3">
    <citation type="journal article" date="1991" name="Mol. Biol. Evol.">
        <title>Molecular evolution of the mammalian ribosomal protein gene, RPS14.</title>
        <authorList>
            <person name="Rhoads D.D."/>
            <person name="Roufa D.J."/>
        </authorList>
    </citation>
    <scope>NUCLEOTIDE SEQUENCE [GENOMIC DNA]</scope>
</reference>
<gene>
    <name type="primary">RPS14</name>
    <name type="synonym">EMTB</name>
</gene>
<proteinExistence type="evidence at transcript level"/>
<sequence length="151" mass="16273">MAPRKGKEKKEEQVISLGPQVAEGENVFGVCHIFASFNDTFVHVTDLSGKETICRVTGGMKVKADRDESSPYAAMLAAQDVAQRCKELGITALHIKLRATGGNRTKTPGPGAQSALRALARSGMKIGRIEDVTPIPSDSTRRKGGRRGRRL</sequence>
<accession>P62265</accession>
<accession>P06366</accession>
<organism>
    <name type="scientific">Cricetulus griseus</name>
    <name type="common">Chinese hamster</name>
    <name type="synonym">Cricetulus barabensis griseus</name>
    <dbReference type="NCBI Taxonomy" id="10029"/>
    <lineage>
        <taxon>Eukaryota</taxon>
        <taxon>Metazoa</taxon>
        <taxon>Chordata</taxon>
        <taxon>Craniata</taxon>
        <taxon>Vertebrata</taxon>
        <taxon>Euteleostomi</taxon>
        <taxon>Mammalia</taxon>
        <taxon>Eutheria</taxon>
        <taxon>Euarchontoglires</taxon>
        <taxon>Glires</taxon>
        <taxon>Rodentia</taxon>
        <taxon>Myomorpha</taxon>
        <taxon>Muroidea</taxon>
        <taxon>Cricetidae</taxon>
        <taxon>Cricetinae</taxon>
        <taxon>Cricetulus</taxon>
    </lineage>
</organism>
<protein>
    <recommendedName>
        <fullName evidence="3">Small ribosomal subunit protein uS11</fullName>
    </recommendedName>
    <alternativeName>
        <fullName>40S ribosomal protein S14</fullName>
    </alternativeName>
</protein>
<name>RS14_CRIGR</name>
<keyword id="KW-0963">Cytoplasm</keyword>
<keyword id="KW-1017">Isopeptide bond</keyword>
<keyword id="KW-0539">Nucleus</keyword>
<keyword id="KW-0597">Phosphoprotein</keyword>
<keyword id="KW-0687">Ribonucleoprotein</keyword>
<keyword id="KW-0689">Ribosomal protein</keyword>
<keyword id="KW-0832">Ubl conjugation</keyword>
<feature type="chain" id="PRO_0000123336" description="Small ribosomal subunit protein uS11">
    <location>
        <begin position="1"/>
        <end position="151"/>
    </location>
</feature>
<feature type="region of interest" description="Disordered" evidence="2">
    <location>
        <begin position="131"/>
        <end position="151"/>
    </location>
</feature>
<feature type="compositionally biased region" description="Basic residues" evidence="2">
    <location>
        <begin position="142"/>
        <end position="151"/>
    </location>
</feature>
<feature type="modified residue" description="Phosphoserine" evidence="1">
    <location>
        <position position="16"/>
    </location>
</feature>
<feature type="modified residue" description="Phosphothreonine" evidence="1">
    <location>
        <position position="133"/>
    </location>
</feature>
<feature type="modified residue" description="Phosphoserine" evidence="1">
    <location>
        <position position="139"/>
    </location>
</feature>
<feature type="cross-link" description="Glycyl lysine isopeptide (Lys-Gly) (interchain with G-Cter in SUMO2)" evidence="1">
    <location>
        <position position="61"/>
    </location>
</feature>
<feature type="cross-link" description="Glycyl lysine isopeptide (Lys-Gly) (interchain with G-Cter in SUMO2)" evidence="1">
    <location>
        <position position="63"/>
    </location>
</feature>
<feature type="cross-link" description="Glycyl lysine isopeptide (Lys-Gly) (interchain with G-Cter in SUMO2)" evidence="1">
    <location>
        <position position="106"/>
    </location>
</feature>
<comment type="function">
    <text evidence="1">Component of the small ribosomal subunit. The ribosome is a large ribonucleoprotein complex responsible for the synthesis of proteins in the cell. Part of the small subunit (SSU) processome, first precursor of the small eukaryotic ribosomal subunit. During the assembly of the SSU processome in the nucleolus, many ribosome biogenesis factors, an RNA chaperone and ribosomal proteins associate with the nascent pre-rRNA and work in concert to generate RNA folding, modifications, rearrangements and cleavage as well as targeted degradation of pre-ribosomal RNA by the RNA exosome.</text>
</comment>
<comment type="subunit">
    <text evidence="1">Component of the small ribosomal subunit. Part of the small subunit (SSU) processome, composed of more than 70 proteins and the RNA chaperone small nucleolar RNA (snoRNA) U3.</text>
</comment>
<comment type="subcellular location">
    <subcellularLocation>
        <location evidence="1">Cytoplasm</location>
    </subcellularLocation>
    <subcellularLocation>
        <location evidence="1">Nucleus</location>
        <location evidence="1">Nucleolus</location>
    </subcellularLocation>
</comment>
<comment type="miscellaneous">
    <text>Mutations in S14 can lead to resistance to the protein synthesis inhibitor emetine.</text>
</comment>
<comment type="similarity">
    <text evidence="3">Belongs to the universal ribosomal protein uS11 family.</text>
</comment>
<dbReference type="EMBL" id="M11241">
    <property type="protein sequence ID" value="AAA37016.1"/>
    <property type="molecule type" value="mRNA"/>
</dbReference>
<dbReference type="EMBL" id="M35008">
    <property type="protein sequence ID" value="AAA37017.1"/>
    <property type="molecule type" value="Genomic_DNA"/>
</dbReference>
<dbReference type="PIR" id="A02725">
    <property type="entry name" value="R4HY14"/>
</dbReference>
<dbReference type="RefSeq" id="NP_001231448.1">
    <property type="nucleotide sequence ID" value="NM_001244519.1"/>
</dbReference>
<dbReference type="SMR" id="P62265"/>
<dbReference type="PaxDb" id="10029-NP_001231448.1"/>
<dbReference type="Ensembl" id="ENSCGRT00001023942.1">
    <property type="protein sequence ID" value="ENSCGRP00001019698.1"/>
    <property type="gene ID" value="ENSCGRG00001019064.1"/>
</dbReference>
<dbReference type="GeneID" id="100689292"/>
<dbReference type="KEGG" id="cge:100689292"/>
<dbReference type="CTD" id="6208"/>
<dbReference type="eggNOG" id="KOG0407">
    <property type="taxonomic scope" value="Eukaryota"/>
</dbReference>
<dbReference type="GeneTree" id="ENSGT00390000000703"/>
<dbReference type="OMA" id="KWGVAHI"/>
<dbReference type="OrthoDB" id="1677536at2759"/>
<dbReference type="Proteomes" id="UP000694386">
    <property type="component" value="Unplaced"/>
</dbReference>
<dbReference type="Proteomes" id="UP001108280">
    <property type="component" value="Chromosome 2"/>
</dbReference>
<dbReference type="GO" id="GO:0022627">
    <property type="term" value="C:cytosolic small ribosomal subunit"/>
    <property type="evidence" value="ECO:0007669"/>
    <property type="project" value="Ensembl"/>
</dbReference>
<dbReference type="GO" id="GO:0005730">
    <property type="term" value="C:nucleolus"/>
    <property type="evidence" value="ECO:0007669"/>
    <property type="project" value="UniProtKB-SubCell"/>
</dbReference>
<dbReference type="GO" id="GO:0014069">
    <property type="term" value="C:postsynaptic density"/>
    <property type="evidence" value="ECO:0007669"/>
    <property type="project" value="Ensembl"/>
</dbReference>
<dbReference type="GO" id="GO:0032040">
    <property type="term" value="C:small-subunit processome"/>
    <property type="evidence" value="ECO:0000250"/>
    <property type="project" value="UniProtKB"/>
</dbReference>
<dbReference type="GO" id="GO:0048027">
    <property type="term" value="F:mRNA 5'-UTR binding"/>
    <property type="evidence" value="ECO:0007669"/>
    <property type="project" value="Ensembl"/>
</dbReference>
<dbReference type="GO" id="GO:0003735">
    <property type="term" value="F:structural constituent of ribosome"/>
    <property type="evidence" value="ECO:0007669"/>
    <property type="project" value="Ensembl"/>
</dbReference>
<dbReference type="GO" id="GO:0045182">
    <property type="term" value="F:translation regulator activity"/>
    <property type="evidence" value="ECO:0007669"/>
    <property type="project" value="Ensembl"/>
</dbReference>
<dbReference type="GO" id="GO:0002181">
    <property type="term" value="P:cytoplasmic translation"/>
    <property type="evidence" value="ECO:0007669"/>
    <property type="project" value="Ensembl"/>
</dbReference>
<dbReference type="GO" id="GO:0030218">
    <property type="term" value="P:erythrocyte differentiation"/>
    <property type="evidence" value="ECO:0007669"/>
    <property type="project" value="Ensembl"/>
</dbReference>
<dbReference type="GO" id="GO:0000122">
    <property type="term" value="P:negative regulation of transcription by RNA polymerase II"/>
    <property type="evidence" value="ECO:0007669"/>
    <property type="project" value="Ensembl"/>
</dbReference>
<dbReference type="GO" id="GO:0042274">
    <property type="term" value="P:ribosomal small subunit biogenesis"/>
    <property type="evidence" value="ECO:0000250"/>
    <property type="project" value="UniProtKB"/>
</dbReference>
<dbReference type="FunFam" id="3.30.420.80:FF:000018">
    <property type="entry name" value="40S ribosomal protein S14"/>
    <property type="match status" value="1"/>
</dbReference>
<dbReference type="Gene3D" id="3.30.420.80">
    <property type="entry name" value="Ribosomal protein S11"/>
    <property type="match status" value="1"/>
</dbReference>
<dbReference type="HAMAP" id="MF_01310">
    <property type="entry name" value="Ribosomal_uS11"/>
    <property type="match status" value="1"/>
</dbReference>
<dbReference type="InterPro" id="IPR001971">
    <property type="entry name" value="Ribosomal_uS11"/>
</dbReference>
<dbReference type="InterPro" id="IPR018102">
    <property type="entry name" value="Ribosomal_uS11_CS"/>
</dbReference>
<dbReference type="InterPro" id="IPR036967">
    <property type="entry name" value="Ribosomal_uS11_sf"/>
</dbReference>
<dbReference type="NCBIfam" id="NF007176">
    <property type="entry name" value="PRK09607.1"/>
    <property type="match status" value="1"/>
</dbReference>
<dbReference type="PANTHER" id="PTHR11759">
    <property type="entry name" value="40S RIBOSOMAL PROTEIN S14/30S RIBOSOMAL PROTEIN S11"/>
    <property type="match status" value="1"/>
</dbReference>
<dbReference type="Pfam" id="PF00411">
    <property type="entry name" value="Ribosomal_S11"/>
    <property type="match status" value="1"/>
</dbReference>
<dbReference type="PIRSF" id="PIRSF002131">
    <property type="entry name" value="Ribosomal_S11"/>
    <property type="match status" value="1"/>
</dbReference>
<dbReference type="SUPFAM" id="SSF53137">
    <property type="entry name" value="Translational machinery components"/>
    <property type="match status" value="1"/>
</dbReference>
<dbReference type="PROSITE" id="PS00054">
    <property type="entry name" value="RIBOSOMAL_S11"/>
    <property type="match status" value="1"/>
</dbReference>